<accession>E3F0U0</accession>
<keyword id="KW-0997">Cell inner membrane</keyword>
<keyword id="KW-1003">Cell membrane</keyword>
<keyword id="KW-0472">Membrane</keyword>
<keyword id="KW-0653">Protein transport</keyword>
<keyword id="KW-0811">Translocation</keyword>
<keyword id="KW-0812">Transmembrane</keyword>
<keyword id="KW-1133">Transmembrane helix</keyword>
<keyword id="KW-0813">Transport</keyword>
<protein>
    <recommendedName>
        <fullName>Protein translocase subunit SecF</fullName>
    </recommendedName>
</protein>
<sequence length="329" mass="35652">MAFRLKLVPDKTSVNFFKWGGIPTHATFALALASLIAVMTIGLNYGIDFLGGTTIRAESSENVAVSEYRSALDQIELGDVTITEVFDPGFRADQFVKQVRIQAANETEVSNALIGQVEAALQVVDPQVVFTAVETVGPKVSGELIQTAVLAAVLAVAASLLGIMAYVWLRFEWQFGFGAVVGLFTDAMITVGLFSVFQVRFDLTIVAAVLTIVGFSINDKVVVFDRVREILRRDSTTPLPELMVVALNETLSRTVMTTVTTILALVALYIWGGDVIRGFAFAMLFGSVIAVYSTIFVSAQVVLWLGVKRDWEKKTDTGPSGTQFTTSAE</sequence>
<reference key="1">
    <citation type="journal article" date="2011" name="J. Bacteriol.">
        <title>Complete genome sequence of the bacterium Ketogulonicigenium vulgare Y25.</title>
        <authorList>
            <person name="Xiong X.H."/>
            <person name="Han S."/>
            <person name="Wang J.H."/>
            <person name="Jiang Z.H."/>
            <person name="Chen W."/>
            <person name="Jia N."/>
            <person name="Wei H.L."/>
            <person name="Cheng H."/>
            <person name="Yang Y.X."/>
            <person name="Zhu B."/>
            <person name="You S."/>
            <person name="He J.Y."/>
            <person name="Hou W."/>
            <person name="Chen M.X."/>
            <person name="Yu C.J."/>
            <person name="Jiao Y.H."/>
            <person name="Zhang W.C."/>
        </authorList>
    </citation>
    <scope>NUCLEOTIDE SEQUENCE [LARGE SCALE GENOMIC DNA]</scope>
    <source>
        <strain>Y25</strain>
    </source>
</reference>
<name>SECF_KETVY</name>
<organism>
    <name type="scientific">Ketogulonicigenium vulgare (strain Y25)</name>
    <dbReference type="NCBI Taxonomy" id="880591"/>
    <lineage>
        <taxon>Bacteria</taxon>
        <taxon>Pseudomonadati</taxon>
        <taxon>Pseudomonadota</taxon>
        <taxon>Alphaproteobacteria</taxon>
        <taxon>Rhodobacterales</taxon>
        <taxon>Roseobacteraceae</taxon>
        <taxon>Ketogulonicigenium</taxon>
    </lineage>
</organism>
<evidence type="ECO:0000250" key="1"/>
<evidence type="ECO:0000255" key="2"/>
<evidence type="ECO:0000305" key="3"/>
<gene>
    <name type="primary">secF</name>
    <name type="ordered locus">EIO_1371</name>
</gene>
<dbReference type="EMBL" id="CP002224">
    <property type="protein sequence ID" value="ADO42505.1"/>
    <property type="status" value="ALT_FRAME"/>
    <property type="molecule type" value="Genomic_DNA"/>
</dbReference>
<dbReference type="SMR" id="E3F0U0"/>
<dbReference type="KEGG" id="kvu:EIO_1371"/>
<dbReference type="HOGENOM" id="CLU_129894_0_0_5"/>
<dbReference type="GO" id="GO:0005886">
    <property type="term" value="C:plasma membrane"/>
    <property type="evidence" value="ECO:0007669"/>
    <property type="project" value="UniProtKB-SubCell"/>
</dbReference>
<dbReference type="GO" id="GO:0015450">
    <property type="term" value="F:protein-transporting ATPase activity"/>
    <property type="evidence" value="ECO:0007669"/>
    <property type="project" value="InterPro"/>
</dbReference>
<dbReference type="GO" id="GO:0065002">
    <property type="term" value="P:intracellular protein transmembrane transport"/>
    <property type="evidence" value="ECO:0007669"/>
    <property type="project" value="UniProtKB-UniRule"/>
</dbReference>
<dbReference type="GO" id="GO:0006605">
    <property type="term" value="P:protein targeting"/>
    <property type="evidence" value="ECO:0007669"/>
    <property type="project" value="UniProtKB-UniRule"/>
</dbReference>
<dbReference type="GO" id="GO:0043952">
    <property type="term" value="P:protein transport by the Sec complex"/>
    <property type="evidence" value="ECO:0007669"/>
    <property type="project" value="UniProtKB-UniRule"/>
</dbReference>
<dbReference type="Gene3D" id="1.20.1640.10">
    <property type="entry name" value="Multidrug efflux transporter AcrB transmembrane domain"/>
    <property type="match status" value="1"/>
</dbReference>
<dbReference type="HAMAP" id="MF_01464_B">
    <property type="entry name" value="SecF_B"/>
    <property type="match status" value="1"/>
</dbReference>
<dbReference type="InterPro" id="IPR022813">
    <property type="entry name" value="SecD/SecF_arch_bac"/>
</dbReference>
<dbReference type="InterPro" id="IPR022645">
    <property type="entry name" value="SecD/SecF_bac"/>
</dbReference>
<dbReference type="InterPro" id="IPR022646">
    <property type="entry name" value="SecD/SecF_CS"/>
</dbReference>
<dbReference type="InterPro" id="IPR048634">
    <property type="entry name" value="SecD_SecF_C"/>
</dbReference>
<dbReference type="InterPro" id="IPR055344">
    <property type="entry name" value="SecD_SecF_C_bact"/>
</dbReference>
<dbReference type="InterPro" id="IPR005665">
    <property type="entry name" value="SecF_bac"/>
</dbReference>
<dbReference type="NCBIfam" id="TIGR00916">
    <property type="entry name" value="2A0604s01"/>
    <property type="match status" value="1"/>
</dbReference>
<dbReference type="NCBIfam" id="TIGR00966">
    <property type="entry name" value="transloc_SecF"/>
    <property type="match status" value="1"/>
</dbReference>
<dbReference type="PANTHER" id="PTHR30081:SF8">
    <property type="entry name" value="PROTEIN TRANSLOCASE SUBUNIT SECF"/>
    <property type="match status" value="1"/>
</dbReference>
<dbReference type="PANTHER" id="PTHR30081">
    <property type="entry name" value="PROTEIN-EXPORT MEMBRANE PROTEIN SEC"/>
    <property type="match status" value="1"/>
</dbReference>
<dbReference type="Pfam" id="PF07549">
    <property type="entry name" value="Sec_GG"/>
    <property type="match status" value="1"/>
</dbReference>
<dbReference type="Pfam" id="PF02355">
    <property type="entry name" value="SecD_SecF_C"/>
    <property type="match status" value="1"/>
</dbReference>
<dbReference type="PRINTS" id="PR01755">
    <property type="entry name" value="SECFTRNLCASE"/>
</dbReference>
<dbReference type="SUPFAM" id="SSF82866">
    <property type="entry name" value="Multidrug efflux transporter AcrB transmembrane domain"/>
    <property type="match status" value="1"/>
</dbReference>
<feature type="chain" id="PRO_0000412697" description="Protein translocase subunit SecF">
    <location>
        <begin position="1"/>
        <end position="329"/>
    </location>
</feature>
<feature type="transmembrane region" description="Helical" evidence="2">
    <location>
        <begin position="27"/>
        <end position="47"/>
    </location>
</feature>
<feature type="transmembrane region" description="Helical" evidence="2">
    <location>
        <begin position="149"/>
        <end position="169"/>
    </location>
</feature>
<feature type="transmembrane region" description="Helical" evidence="2">
    <location>
        <begin position="177"/>
        <end position="197"/>
    </location>
</feature>
<feature type="transmembrane region" description="Helical" evidence="2">
    <location>
        <begin position="204"/>
        <end position="224"/>
    </location>
</feature>
<feature type="transmembrane region" description="Helical" evidence="2">
    <location>
        <begin position="256"/>
        <end position="276"/>
    </location>
</feature>
<feature type="transmembrane region" description="Helical" evidence="2">
    <location>
        <begin position="279"/>
        <end position="299"/>
    </location>
</feature>
<proteinExistence type="inferred from homology"/>
<comment type="function">
    <text evidence="1">Part of the Sec protein translocase complex. Interacts with the SecYEG preprotein conducting channel. SecDF uses the proton motive force (PMF) to complete protein translocation after the ATP-dependent function of SecA (By similarity).</text>
</comment>
<comment type="subunit">
    <text evidence="1">Forms a complex with SecD. Part of the essential Sec protein translocation apparatus which comprises SecA, SecYEG and auxiliary proteins SecDF-YajC and YidC (By similarity).</text>
</comment>
<comment type="subcellular location">
    <subcellularLocation>
        <location evidence="1">Cell inner membrane</location>
        <topology evidence="1">Multi-pass membrane protein</topology>
    </subcellularLocation>
</comment>
<comment type="similarity">
    <text evidence="3">Belongs to the SecD/SecF family. SecF subfamily.</text>
</comment>
<comment type="sequence caution" evidence="3">
    <conflict type="frameshift">
        <sequence resource="EMBL-CDS" id="ADO42505"/>
    </conflict>
</comment>